<proteinExistence type="inferred from homology"/>
<reference key="1">
    <citation type="journal article" date="2007" name="Proc. Natl. Acad. Sci. U.S.A.">
        <title>Deep-sea vent epsilon-proteobacterial genomes provide insights into emergence of pathogens.</title>
        <authorList>
            <person name="Nakagawa S."/>
            <person name="Takaki Y."/>
            <person name="Shimamura S."/>
            <person name="Reysenbach A.-L."/>
            <person name="Takai K."/>
            <person name="Horikoshi K."/>
        </authorList>
    </citation>
    <scope>NUCLEOTIDE SEQUENCE [LARGE SCALE GENOMIC DNA]</scope>
    <source>
        <strain>SB155-2</strain>
    </source>
</reference>
<dbReference type="EC" id="2.1.2.1" evidence="1"/>
<dbReference type="EMBL" id="AP009178">
    <property type="protein sequence ID" value="BAF70287.1"/>
    <property type="molecule type" value="Genomic_DNA"/>
</dbReference>
<dbReference type="RefSeq" id="WP_012082550.1">
    <property type="nucleotide sequence ID" value="NC_009662.1"/>
</dbReference>
<dbReference type="SMR" id="A6Q478"/>
<dbReference type="FunCoup" id="A6Q478">
    <property type="interactions" value="467"/>
</dbReference>
<dbReference type="STRING" id="387092.NIS_1178"/>
<dbReference type="KEGG" id="nis:NIS_1178"/>
<dbReference type="eggNOG" id="COG0112">
    <property type="taxonomic scope" value="Bacteria"/>
</dbReference>
<dbReference type="HOGENOM" id="CLU_022477_2_1_7"/>
<dbReference type="InParanoid" id="A6Q478"/>
<dbReference type="OrthoDB" id="9803846at2"/>
<dbReference type="UniPathway" id="UPA00193"/>
<dbReference type="UniPathway" id="UPA00288">
    <property type="reaction ID" value="UER01023"/>
</dbReference>
<dbReference type="Proteomes" id="UP000001118">
    <property type="component" value="Chromosome"/>
</dbReference>
<dbReference type="GO" id="GO:0005829">
    <property type="term" value="C:cytosol"/>
    <property type="evidence" value="ECO:0007669"/>
    <property type="project" value="TreeGrafter"/>
</dbReference>
<dbReference type="GO" id="GO:0004372">
    <property type="term" value="F:glycine hydroxymethyltransferase activity"/>
    <property type="evidence" value="ECO:0007669"/>
    <property type="project" value="UniProtKB-UniRule"/>
</dbReference>
<dbReference type="GO" id="GO:0030170">
    <property type="term" value="F:pyridoxal phosphate binding"/>
    <property type="evidence" value="ECO:0007669"/>
    <property type="project" value="UniProtKB-UniRule"/>
</dbReference>
<dbReference type="GO" id="GO:0019264">
    <property type="term" value="P:glycine biosynthetic process from serine"/>
    <property type="evidence" value="ECO:0007669"/>
    <property type="project" value="UniProtKB-UniRule"/>
</dbReference>
<dbReference type="GO" id="GO:0035999">
    <property type="term" value="P:tetrahydrofolate interconversion"/>
    <property type="evidence" value="ECO:0007669"/>
    <property type="project" value="UniProtKB-UniRule"/>
</dbReference>
<dbReference type="CDD" id="cd00378">
    <property type="entry name" value="SHMT"/>
    <property type="match status" value="1"/>
</dbReference>
<dbReference type="FunFam" id="3.40.640.10:FF:000001">
    <property type="entry name" value="Serine hydroxymethyltransferase"/>
    <property type="match status" value="1"/>
</dbReference>
<dbReference type="Gene3D" id="3.90.1150.10">
    <property type="entry name" value="Aspartate Aminotransferase, domain 1"/>
    <property type="match status" value="1"/>
</dbReference>
<dbReference type="Gene3D" id="3.40.640.10">
    <property type="entry name" value="Type I PLP-dependent aspartate aminotransferase-like (Major domain)"/>
    <property type="match status" value="1"/>
</dbReference>
<dbReference type="HAMAP" id="MF_00051">
    <property type="entry name" value="SHMT"/>
    <property type="match status" value="1"/>
</dbReference>
<dbReference type="InterPro" id="IPR015424">
    <property type="entry name" value="PyrdxlP-dep_Trfase"/>
</dbReference>
<dbReference type="InterPro" id="IPR015421">
    <property type="entry name" value="PyrdxlP-dep_Trfase_major"/>
</dbReference>
<dbReference type="InterPro" id="IPR015422">
    <property type="entry name" value="PyrdxlP-dep_Trfase_small"/>
</dbReference>
<dbReference type="InterPro" id="IPR001085">
    <property type="entry name" value="Ser_HO-MeTrfase"/>
</dbReference>
<dbReference type="InterPro" id="IPR049943">
    <property type="entry name" value="Ser_HO-MeTrfase-like"/>
</dbReference>
<dbReference type="InterPro" id="IPR019798">
    <property type="entry name" value="Ser_HO-MeTrfase_PLP_BS"/>
</dbReference>
<dbReference type="InterPro" id="IPR039429">
    <property type="entry name" value="SHMT-like_dom"/>
</dbReference>
<dbReference type="NCBIfam" id="NF000586">
    <property type="entry name" value="PRK00011.1"/>
    <property type="match status" value="1"/>
</dbReference>
<dbReference type="PANTHER" id="PTHR11680">
    <property type="entry name" value="SERINE HYDROXYMETHYLTRANSFERASE"/>
    <property type="match status" value="1"/>
</dbReference>
<dbReference type="PANTHER" id="PTHR11680:SF50">
    <property type="entry name" value="SERINE HYDROXYMETHYLTRANSFERASE"/>
    <property type="match status" value="1"/>
</dbReference>
<dbReference type="Pfam" id="PF00464">
    <property type="entry name" value="SHMT"/>
    <property type="match status" value="1"/>
</dbReference>
<dbReference type="PIRSF" id="PIRSF000412">
    <property type="entry name" value="SHMT"/>
    <property type="match status" value="1"/>
</dbReference>
<dbReference type="SUPFAM" id="SSF53383">
    <property type="entry name" value="PLP-dependent transferases"/>
    <property type="match status" value="1"/>
</dbReference>
<dbReference type="PROSITE" id="PS00096">
    <property type="entry name" value="SHMT"/>
    <property type="match status" value="1"/>
</dbReference>
<gene>
    <name evidence="1" type="primary">glyA</name>
    <name type="ordered locus">NIS_1178</name>
</gene>
<evidence type="ECO:0000255" key="1">
    <source>
        <dbReference type="HAMAP-Rule" id="MF_00051"/>
    </source>
</evidence>
<sequence>MDFLKNQDPAVYEIFEKELQRQTDHLEMIASENFTSPAVMEAMGSVFTNKYAEGYPGKRYYGGCEYADAIEELAIQRAKELFGCEFVNVQPHSGSQANQGVYLALLKPYDKILGMDLSHGGHLTHGAKVNASGKIYQSFFYGVNDEGWIDYDRVLDIAKIVKPKLIVCGASAYPRVIDFKKFREIADEVGALLMADIAHIAGLVAAGEHPSPFPYCDVVTTTTHKTLRGPRGGMIMTNDADIAKKINSAIFPGIQGGPLVHVIAAKAVGFGENLKPEWKEYAKQMRINASTLATVLMNRGYNVVSGGTDNHLVLVSFLDKDFSGKDADEALGRAGITVNKNTVPGETRSPFVTSGIRIGSPALTARGMKEAEFELIANKIADVLDNIHDVNLHEKIKEEMVALARKFVIYDRPTY</sequence>
<name>GLYA_NITSB</name>
<comment type="function">
    <text evidence="1">Catalyzes the reversible interconversion of serine and glycine with tetrahydrofolate (THF) serving as the one-carbon carrier. This reaction serves as the major source of one-carbon groups required for the biosynthesis of purines, thymidylate, methionine, and other important biomolecules. Also exhibits THF-independent aldolase activity toward beta-hydroxyamino acids, producing glycine and aldehydes, via a retro-aldol mechanism.</text>
</comment>
<comment type="catalytic activity">
    <reaction evidence="1">
        <text>(6R)-5,10-methylene-5,6,7,8-tetrahydrofolate + glycine + H2O = (6S)-5,6,7,8-tetrahydrofolate + L-serine</text>
        <dbReference type="Rhea" id="RHEA:15481"/>
        <dbReference type="ChEBI" id="CHEBI:15377"/>
        <dbReference type="ChEBI" id="CHEBI:15636"/>
        <dbReference type="ChEBI" id="CHEBI:33384"/>
        <dbReference type="ChEBI" id="CHEBI:57305"/>
        <dbReference type="ChEBI" id="CHEBI:57453"/>
        <dbReference type="EC" id="2.1.2.1"/>
    </reaction>
</comment>
<comment type="cofactor">
    <cofactor evidence="1">
        <name>pyridoxal 5'-phosphate</name>
        <dbReference type="ChEBI" id="CHEBI:597326"/>
    </cofactor>
</comment>
<comment type="pathway">
    <text evidence="1">One-carbon metabolism; tetrahydrofolate interconversion.</text>
</comment>
<comment type="pathway">
    <text evidence="1">Amino-acid biosynthesis; glycine biosynthesis; glycine from L-serine: step 1/1.</text>
</comment>
<comment type="subunit">
    <text evidence="1">Homodimer.</text>
</comment>
<comment type="subcellular location">
    <subcellularLocation>
        <location evidence="1">Cytoplasm</location>
    </subcellularLocation>
</comment>
<comment type="similarity">
    <text evidence="1">Belongs to the SHMT family.</text>
</comment>
<feature type="chain" id="PRO_1000006285" description="Serine hydroxymethyltransferase">
    <location>
        <begin position="1"/>
        <end position="415"/>
    </location>
</feature>
<feature type="binding site" evidence="1">
    <location>
        <position position="117"/>
    </location>
    <ligand>
        <name>(6S)-5,6,7,8-tetrahydrofolate</name>
        <dbReference type="ChEBI" id="CHEBI:57453"/>
    </ligand>
</feature>
<feature type="binding site" evidence="1">
    <location>
        <begin position="121"/>
        <end position="123"/>
    </location>
    <ligand>
        <name>(6S)-5,6,7,8-tetrahydrofolate</name>
        <dbReference type="ChEBI" id="CHEBI:57453"/>
    </ligand>
</feature>
<feature type="binding site" evidence="1">
    <location>
        <begin position="349"/>
        <end position="351"/>
    </location>
    <ligand>
        <name>(6S)-5,6,7,8-tetrahydrofolate</name>
        <dbReference type="ChEBI" id="CHEBI:57453"/>
    </ligand>
</feature>
<feature type="site" description="Plays an important role in substrate specificity" evidence="1">
    <location>
        <position position="224"/>
    </location>
</feature>
<feature type="modified residue" description="N6-(pyridoxal phosphate)lysine" evidence="1">
    <location>
        <position position="225"/>
    </location>
</feature>
<organism>
    <name type="scientific">Nitratiruptor sp. (strain SB155-2)</name>
    <dbReference type="NCBI Taxonomy" id="387092"/>
    <lineage>
        <taxon>Bacteria</taxon>
        <taxon>Pseudomonadati</taxon>
        <taxon>Campylobacterota</taxon>
        <taxon>Epsilonproteobacteria</taxon>
        <taxon>Nautiliales</taxon>
        <taxon>Nitratiruptoraceae</taxon>
        <taxon>Nitratiruptor</taxon>
    </lineage>
</organism>
<keyword id="KW-0028">Amino-acid biosynthesis</keyword>
<keyword id="KW-0963">Cytoplasm</keyword>
<keyword id="KW-0554">One-carbon metabolism</keyword>
<keyword id="KW-0663">Pyridoxal phosphate</keyword>
<keyword id="KW-1185">Reference proteome</keyword>
<keyword id="KW-0808">Transferase</keyword>
<protein>
    <recommendedName>
        <fullName evidence="1">Serine hydroxymethyltransferase</fullName>
        <shortName evidence="1">SHMT</shortName>
        <shortName evidence="1">Serine methylase</shortName>
        <ecNumber evidence="1">2.1.2.1</ecNumber>
    </recommendedName>
</protein>
<accession>A6Q478</accession>